<keyword id="KW-0027">Amidation</keyword>
<keyword id="KW-0903">Direct protein sequencing</keyword>
<keyword id="KW-1015">Disulfide bond</keyword>
<keyword id="KW-0872">Ion channel impairing toxin</keyword>
<keyword id="KW-0528">Neurotoxin</keyword>
<keyword id="KW-0964">Secreted</keyword>
<keyword id="KW-0732">Signal</keyword>
<keyword id="KW-0800">Toxin</keyword>
<keyword id="KW-0738">Voltage-gated sodium channel impairing toxin</keyword>
<protein>
    <recommendedName>
        <fullName>Beta-toxin Cn4</fullName>
        <shortName>Toxin 4</shortName>
    </recommendedName>
    <alternativeName>
        <fullName>Toxin CngtV</fullName>
    </alternativeName>
    <alternativeName>
        <fullName>Toxin II-10</fullName>
    </alternativeName>
</protein>
<proteinExistence type="evidence at protein level"/>
<reference key="1">
    <citation type="journal article" date="1993" name="FEBS Lett.">
        <title>Primary structure determination and cloning of the cDNA encoding toxin 4 of the scorpion Centruroides noxius Hoffmann.</title>
        <authorList>
            <person name="Vazquez A."/>
            <person name="Becerril B."/>
            <person name="Martin B.M."/>
            <person name="Zamudio F.Z."/>
            <person name="Bolivar F."/>
            <person name="Possani L.D."/>
        </authorList>
    </citation>
    <scope>NUCLEOTIDE SEQUENCE [MRNA]</scope>
    <scope>PROTEIN SEQUENCE OF 20-85</scope>
    <scope>AMIDATION AT ASN-85</scope>
    <source>
        <tissue>Venom</tissue>
        <tissue>Venom gland</tissue>
    </source>
</reference>
<reference key="2">
    <citation type="journal article" date="1993" name="Gene">
        <title>Cloning and characterization of cDNAs that code for Na(+)-channel-blocking toxins of the scorpion Centruroides noxius Hoffmann.</title>
        <authorList>
            <person name="Becerril B."/>
            <person name="Vazquez A."/>
            <person name="Garcia C."/>
            <person name="Corona M."/>
            <person name="Bolivar F."/>
            <person name="Possani L.D."/>
        </authorList>
    </citation>
    <scope>NUCLEOTIDE SEQUENCE [MRNA]</scope>
    <source>
        <tissue>Venom gland</tissue>
    </source>
</reference>
<reference key="3">
    <citation type="journal article" date="1981" name="Carlsberg Res. Commun.">
        <title>The amino terminal sequence of several toxins from the venom of the Mexican scorpion Centruroides noxius Hoffmann.</title>
        <authorList>
            <person name="Possani L.D."/>
            <person name="Dent M.A.R."/>
            <person name="Martin B.M."/>
            <person name="Maelicke A."/>
            <person name="Svendsen I."/>
        </authorList>
    </citation>
    <scope>PARTIAL PROTEIN SEQUENCE</scope>
</reference>
<reference key="4">
    <citation type="submission" date="2003-07" db="EMBL/GenBank/DDBJ databases">
        <title>Alignment of beta-toxin nucleotide sequences.</title>
        <authorList>
            <person name="Zhu S."/>
        </authorList>
    </citation>
    <scope>NUCLEOTIDE SEQUENCE [GENOMIC DNA] OF 20-84</scope>
</reference>
<reference key="5">
    <citation type="journal article" date="1984" name="J. Physiol. (Paris)">
        <title>Selective modification of the squid axon Na currents by Centruroides noxius toxin II-10.</title>
        <authorList>
            <person name="Carbone E."/>
            <person name="Prestipino G."/>
            <person name="Franciolini F."/>
            <person name="Dent M.A.R."/>
            <person name="Possani L.D."/>
        </authorList>
    </citation>
    <scope>FUNCTION ON SODIUM CHANNEL ACTIVATION</scope>
</reference>
<accession>P45662</accession>
<accession>Q6V4Y1</accession>
<name>SCX4_CENNO</name>
<organism>
    <name type="scientific">Centruroides noxius</name>
    <name type="common">Mexican scorpion</name>
    <dbReference type="NCBI Taxonomy" id="6878"/>
    <lineage>
        <taxon>Eukaryota</taxon>
        <taxon>Metazoa</taxon>
        <taxon>Ecdysozoa</taxon>
        <taxon>Arthropoda</taxon>
        <taxon>Chelicerata</taxon>
        <taxon>Arachnida</taxon>
        <taxon>Scorpiones</taxon>
        <taxon>Buthida</taxon>
        <taxon>Buthoidea</taxon>
        <taxon>Buthidae</taxon>
        <taxon>Centruroides</taxon>
    </lineage>
</organism>
<sequence length="87" mass="9788">MNSLLMITACLALVGTVWAKEGYLVNSYTGCKYECFKLGDNDYCLRECKQQYGKGAGGYCYAFGCWCTHLYEQAVVWPLKNKTCNGK</sequence>
<dbReference type="EMBL" id="L05063">
    <property type="protein sequence ID" value="AAA28288.1"/>
    <property type="molecule type" value="mRNA"/>
</dbReference>
<dbReference type="EMBL" id="AY351309">
    <property type="protein sequence ID" value="AAR08044.1"/>
    <property type="molecule type" value="Genomic_DNA"/>
</dbReference>
<dbReference type="PIR" id="JN0672">
    <property type="entry name" value="JN0672"/>
</dbReference>
<dbReference type="SMR" id="P45662"/>
<dbReference type="GO" id="GO:0005576">
    <property type="term" value="C:extracellular region"/>
    <property type="evidence" value="ECO:0007669"/>
    <property type="project" value="UniProtKB-SubCell"/>
</dbReference>
<dbReference type="GO" id="GO:0019871">
    <property type="term" value="F:sodium channel inhibitor activity"/>
    <property type="evidence" value="ECO:0007669"/>
    <property type="project" value="InterPro"/>
</dbReference>
<dbReference type="GO" id="GO:0090729">
    <property type="term" value="F:toxin activity"/>
    <property type="evidence" value="ECO:0007669"/>
    <property type="project" value="UniProtKB-KW"/>
</dbReference>
<dbReference type="GO" id="GO:0006952">
    <property type="term" value="P:defense response"/>
    <property type="evidence" value="ECO:0007669"/>
    <property type="project" value="InterPro"/>
</dbReference>
<dbReference type="CDD" id="cd23106">
    <property type="entry name" value="neurotoxins_LC_scorpion"/>
    <property type="match status" value="1"/>
</dbReference>
<dbReference type="FunFam" id="3.30.30.10:FF:000002">
    <property type="entry name" value="Alpha-like toxin BmK-M1"/>
    <property type="match status" value="1"/>
</dbReference>
<dbReference type="Gene3D" id="3.30.30.10">
    <property type="entry name" value="Knottin, scorpion toxin-like"/>
    <property type="match status" value="1"/>
</dbReference>
<dbReference type="InterPro" id="IPR044062">
    <property type="entry name" value="LCN-type_CS_alpha_beta_dom"/>
</dbReference>
<dbReference type="InterPro" id="IPR003614">
    <property type="entry name" value="Scorpion_toxin-like"/>
</dbReference>
<dbReference type="InterPro" id="IPR036574">
    <property type="entry name" value="Scorpion_toxin-like_sf"/>
</dbReference>
<dbReference type="InterPro" id="IPR018218">
    <property type="entry name" value="Scorpion_toxinL"/>
</dbReference>
<dbReference type="PRINTS" id="PR00285">
    <property type="entry name" value="SCORPNTOXIN"/>
</dbReference>
<dbReference type="SMART" id="SM00505">
    <property type="entry name" value="Knot1"/>
    <property type="match status" value="1"/>
</dbReference>
<dbReference type="SUPFAM" id="SSF57095">
    <property type="entry name" value="Scorpion toxin-like"/>
    <property type="match status" value="1"/>
</dbReference>
<dbReference type="PROSITE" id="PS51863">
    <property type="entry name" value="LCN_CSAB"/>
    <property type="match status" value="1"/>
</dbReference>
<comment type="function">
    <text evidence="2">Beta toxins bind voltage-independently at site-4 of sodium channels (Nav) and shift the voltage of activation toward more negative potentials thereby affecting sodium channel activation and promoting spontaneous and repetitive firing. This toxin affects the activation mechanism of sodium channels of squid axon. It also competes with Cn2 in rat brain synaptosomes. Is lethal to mice.</text>
</comment>
<comment type="subcellular location">
    <subcellularLocation>
        <location>Secreted</location>
    </subcellularLocation>
</comment>
<comment type="tissue specificity">
    <text>Expressed by the venom gland.</text>
</comment>
<comment type="domain">
    <text evidence="4">Has the structural arrangement of an alpha-helix connected to antiparallel beta-sheets by disulfide bonds (CS-alpha/beta).</text>
</comment>
<comment type="similarity">
    <text evidence="4">Belongs to the long (4 C-C) scorpion toxin superfamily. Sodium channel inhibitor family. Beta subfamily.</text>
</comment>
<feature type="signal peptide" evidence="3">
    <location>
        <begin position="1"/>
        <end position="19"/>
    </location>
</feature>
<feature type="chain" id="PRO_0000035281" description="Beta-toxin Cn4">
    <location>
        <begin position="20"/>
        <end position="85"/>
    </location>
</feature>
<feature type="domain" description="LCN-type CS-alpha/beta" evidence="1">
    <location>
        <begin position="20"/>
        <end position="85"/>
    </location>
</feature>
<feature type="modified residue" description="Asparagine amide" evidence="3">
    <location>
        <position position="85"/>
    </location>
</feature>
<feature type="disulfide bond" evidence="1">
    <location>
        <begin position="31"/>
        <end position="84"/>
    </location>
</feature>
<feature type="disulfide bond" evidence="1">
    <location>
        <begin position="35"/>
        <end position="60"/>
    </location>
</feature>
<feature type="disulfide bond" evidence="1">
    <location>
        <begin position="44"/>
        <end position="65"/>
    </location>
</feature>
<feature type="disulfide bond" evidence="1">
    <location>
        <begin position="48"/>
        <end position="67"/>
    </location>
</feature>
<feature type="sequence conflict" description="In Ref. 4; AAR08044." evidence="4" ref="4">
    <location>
        <position position="27"/>
    </location>
</feature>
<evidence type="ECO:0000255" key="1">
    <source>
        <dbReference type="PROSITE-ProRule" id="PRU01210"/>
    </source>
</evidence>
<evidence type="ECO:0000269" key="2">
    <source>
    </source>
</evidence>
<evidence type="ECO:0000269" key="3">
    <source>
    </source>
</evidence>
<evidence type="ECO:0000305" key="4"/>